<comment type="catalytic activity">
    <reaction evidence="1">
        <text>tRNA(Leu) + L-leucine + ATP = L-leucyl-tRNA(Leu) + AMP + diphosphate</text>
        <dbReference type="Rhea" id="RHEA:11688"/>
        <dbReference type="Rhea" id="RHEA-COMP:9613"/>
        <dbReference type="Rhea" id="RHEA-COMP:9622"/>
        <dbReference type="ChEBI" id="CHEBI:30616"/>
        <dbReference type="ChEBI" id="CHEBI:33019"/>
        <dbReference type="ChEBI" id="CHEBI:57427"/>
        <dbReference type="ChEBI" id="CHEBI:78442"/>
        <dbReference type="ChEBI" id="CHEBI:78494"/>
        <dbReference type="ChEBI" id="CHEBI:456215"/>
        <dbReference type="EC" id="6.1.1.4"/>
    </reaction>
</comment>
<comment type="subcellular location">
    <subcellularLocation>
        <location evidence="1">Cytoplasm</location>
    </subcellularLocation>
</comment>
<comment type="similarity">
    <text evidence="1">Belongs to the class-I aminoacyl-tRNA synthetase family.</text>
</comment>
<name>SYL_BACHK</name>
<accession>Q6HCE2</accession>
<gene>
    <name evidence="1" type="primary">leuS</name>
    <name type="ordered locus">BT9727_4472</name>
</gene>
<organism>
    <name type="scientific">Bacillus thuringiensis subsp. konkukian (strain 97-27)</name>
    <dbReference type="NCBI Taxonomy" id="281309"/>
    <lineage>
        <taxon>Bacteria</taxon>
        <taxon>Bacillati</taxon>
        <taxon>Bacillota</taxon>
        <taxon>Bacilli</taxon>
        <taxon>Bacillales</taxon>
        <taxon>Bacillaceae</taxon>
        <taxon>Bacillus</taxon>
        <taxon>Bacillus cereus group</taxon>
    </lineage>
</organism>
<proteinExistence type="inferred from homology"/>
<protein>
    <recommendedName>
        <fullName evidence="1">Leucine--tRNA ligase</fullName>
        <ecNumber evidence="1">6.1.1.4</ecNumber>
    </recommendedName>
    <alternativeName>
        <fullName evidence="1">Leucyl-tRNA synthetase</fullName>
        <shortName evidence="1">LeuRS</shortName>
    </alternativeName>
</protein>
<dbReference type="EC" id="6.1.1.4" evidence="1"/>
<dbReference type="EMBL" id="AE017355">
    <property type="protein sequence ID" value="AAT63896.1"/>
    <property type="molecule type" value="Genomic_DNA"/>
</dbReference>
<dbReference type="RefSeq" id="WP_000009455.1">
    <property type="nucleotide sequence ID" value="NC_005957.1"/>
</dbReference>
<dbReference type="RefSeq" id="YP_038784.1">
    <property type="nucleotide sequence ID" value="NC_005957.1"/>
</dbReference>
<dbReference type="SMR" id="Q6HCE2"/>
<dbReference type="KEGG" id="btk:BT9727_4472"/>
<dbReference type="PATRIC" id="fig|281309.8.peg.4761"/>
<dbReference type="HOGENOM" id="CLU_004427_0_0_9"/>
<dbReference type="Proteomes" id="UP000001301">
    <property type="component" value="Chromosome"/>
</dbReference>
<dbReference type="GO" id="GO:0005829">
    <property type="term" value="C:cytosol"/>
    <property type="evidence" value="ECO:0007669"/>
    <property type="project" value="TreeGrafter"/>
</dbReference>
<dbReference type="GO" id="GO:0002161">
    <property type="term" value="F:aminoacyl-tRNA deacylase activity"/>
    <property type="evidence" value="ECO:0007669"/>
    <property type="project" value="InterPro"/>
</dbReference>
<dbReference type="GO" id="GO:0005524">
    <property type="term" value="F:ATP binding"/>
    <property type="evidence" value="ECO:0007669"/>
    <property type="project" value="UniProtKB-UniRule"/>
</dbReference>
<dbReference type="GO" id="GO:0004823">
    <property type="term" value="F:leucine-tRNA ligase activity"/>
    <property type="evidence" value="ECO:0007669"/>
    <property type="project" value="UniProtKB-UniRule"/>
</dbReference>
<dbReference type="GO" id="GO:0006429">
    <property type="term" value="P:leucyl-tRNA aminoacylation"/>
    <property type="evidence" value="ECO:0007669"/>
    <property type="project" value="UniProtKB-UniRule"/>
</dbReference>
<dbReference type="CDD" id="cd07958">
    <property type="entry name" value="Anticodon_Ia_Leu_BEm"/>
    <property type="match status" value="1"/>
</dbReference>
<dbReference type="CDD" id="cd00812">
    <property type="entry name" value="LeuRS_core"/>
    <property type="match status" value="1"/>
</dbReference>
<dbReference type="FunFam" id="1.10.730.10:FF:000012">
    <property type="entry name" value="Leucine--tRNA ligase"/>
    <property type="match status" value="1"/>
</dbReference>
<dbReference type="FunFam" id="1.10.730.10:FF:000018">
    <property type="entry name" value="Leucine--tRNA ligase"/>
    <property type="match status" value="1"/>
</dbReference>
<dbReference type="FunFam" id="3.10.20.590:FF:000001">
    <property type="entry name" value="Leucine--tRNA ligase"/>
    <property type="match status" value="1"/>
</dbReference>
<dbReference type="FunFam" id="3.40.50.620:FF:000056">
    <property type="entry name" value="Leucine--tRNA ligase"/>
    <property type="match status" value="1"/>
</dbReference>
<dbReference type="FunFam" id="3.40.50.620:FF:000077">
    <property type="entry name" value="Leucine--tRNA ligase"/>
    <property type="match status" value="1"/>
</dbReference>
<dbReference type="Gene3D" id="3.10.20.590">
    <property type="match status" value="1"/>
</dbReference>
<dbReference type="Gene3D" id="3.40.50.620">
    <property type="entry name" value="HUPs"/>
    <property type="match status" value="2"/>
</dbReference>
<dbReference type="Gene3D" id="1.10.730.10">
    <property type="entry name" value="Isoleucyl-tRNA Synthetase, Domain 1"/>
    <property type="match status" value="1"/>
</dbReference>
<dbReference type="HAMAP" id="MF_00049_B">
    <property type="entry name" value="Leu_tRNA_synth_B"/>
    <property type="match status" value="1"/>
</dbReference>
<dbReference type="InterPro" id="IPR001412">
    <property type="entry name" value="aa-tRNA-synth_I_CS"/>
</dbReference>
<dbReference type="InterPro" id="IPR002300">
    <property type="entry name" value="aa-tRNA-synth_Ia"/>
</dbReference>
<dbReference type="InterPro" id="IPR002302">
    <property type="entry name" value="Leu-tRNA-ligase"/>
</dbReference>
<dbReference type="InterPro" id="IPR025709">
    <property type="entry name" value="Leu_tRNA-synth_edit"/>
</dbReference>
<dbReference type="InterPro" id="IPR013155">
    <property type="entry name" value="M/V/L/I-tRNA-synth_anticd-bd"/>
</dbReference>
<dbReference type="InterPro" id="IPR015413">
    <property type="entry name" value="Methionyl/Leucyl_tRNA_Synth"/>
</dbReference>
<dbReference type="InterPro" id="IPR014729">
    <property type="entry name" value="Rossmann-like_a/b/a_fold"/>
</dbReference>
<dbReference type="InterPro" id="IPR009080">
    <property type="entry name" value="tRNAsynth_Ia_anticodon-bd"/>
</dbReference>
<dbReference type="InterPro" id="IPR009008">
    <property type="entry name" value="Val/Leu/Ile-tRNA-synth_edit"/>
</dbReference>
<dbReference type="NCBIfam" id="TIGR00396">
    <property type="entry name" value="leuS_bact"/>
    <property type="match status" value="1"/>
</dbReference>
<dbReference type="PANTHER" id="PTHR43740:SF2">
    <property type="entry name" value="LEUCINE--TRNA LIGASE, MITOCHONDRIAL"/>
    <property type="match status" value="1"/>
</dbReference>
<dbReference type="PANTHER" id="PTHR43740">
    <property type="entry name" value="LEUCYL-TRNA SYNTHETASE"/>
    <property type="match status" value="1"/>
</dbReference>
<dbReference type="Pfam" id="PF08264">
    <property type="entry name" value="Anticodon_1"/>
    <property type="match status" value="1"/>
</dbReference>
<dbReference type="Pfam" id="PF00133">
    <property type="entry name" value="tRNA-synt_1"/>
    <property type="match status" value="1"/>
</dbReference>
<dbReference type="Pfam" id="PF13603">
    <property type="entry name" value="tRNA-synt_1_2"/>
    <property type="match status" value="1"/>
</dbReference>
<dbReference type="Pfam" id="PF09334">
    <property type="entry name" value="tRNA-synt_1g"/>
    <property type="match status" value="1"/>
</dbReference>
<dbReference type="PRINTS" id="PR00985">
    <property type="entry name" value="TRNASYNTHLEU"/>
</dbReference>
<dbReference type="SUPFAM" id="SSF47323">
    <property type="entry name" value="Anticodon-binding domain of a subclass of class I aminoacyl-tRNA synthetases"/>
    <property type="match status" value="1"/>
</dbReference>
<dbReference type="SUPFAM" id="SSF52374">
    <property type="entry name" value="Nucleotidylyl transferase"/>
    <property type="match status" value="1"/>
</dbReference>
<dbReference type="SUPFAM" id="SSF50677">
    <property type="entry name" value="ValRS/IleRS/LeuRS editing domain"/>
    <property type="match status" value="1"/>
</dbReference>
<dbReference type="PROSITE" id="PS00178">
    <property type="entry name" value="AA_TRNA_LIGASE_I"/>
    <property type="match status" value="1"/>
</dbReference>
<reference key="1">
    <citation type="journal article" date="2006" name="J. Bacteriol.">
        <title>Pathogenomic sequence analysis of Bacillus cereus and Bacillus thuringiensis isolates closely related to Bacillus anthracis.</title>
        <authorList>
            <person name="Han C.S."/>
            <person name="Xie G."/>
            <person name="Challacombe J.F."/>
            <person name="Altherr M.R."/>
            <person name="Bhotika S.S."/>
            <person name="Bruce D."/>
            <person name="Campbell C.S."/>
            <person name="Campbell M.L."/>
            <person name="Chen J."/>
            <person name="Chertkov O."/>
            <person name="Cleland C."/>
            <person name="Dimitrijevic M."/>
            <person name="Doggett N.A."/>
            <person name="Fawcett J.J."/>
            <person name="Glavina T."/>
            <person name="Goodwin L.A."/>
            <person name="Hill K.K."/>
            <person name="Hitchcock P."/>
            <person name="Jackson P.J."/>
            <person name="Keim P."/>
            <person name="Kewalramani A.R."/>
            <person name="Longmire J."/>
            <person name="Lucas S."/>
            <person name="Malfatti S."/>
            <person name="McMurry K."/>
            <person name="Meincke L.J."/>
            <person name="Misra M."/>
            <person name="Moseman B.L."/>
            <person name="Mundt M."/>
            <person name="Munk A.C."/>
            <person name="Okinaka R.T."/>
            <person name="Parson-Quintana B."/>
            <person name="Reilly L.P."/>
            <person name="Richardson P."/>
            <person name="Robinson D.L."/>
            <person name="Rubin E."/>
            <person name="Saunders E."/>
            <person name="Tapia R."/>
            <person name="Tesmer J.G."/>
            <person name="Thayer N."/>
            <person name="Thompson L.S."/>
            <person name="Tice H."/>
            <person name="Ticknor L.O."/>
            <person name="Wills P.L."/>
            <person name="Brettin T.S."/>
            <person name="Gilna P."/>
        </authorList>
    </citation>
    <scope>NUCLEOTIDE SEQUENCE [LARGE SCALE GENOMIC DNA]</scope>
    <source>
        <strain>97-27</strain>
    </source>
</reference>
<sequence>MSFNHQEIEKKWQGYWEENKTFRTPDETEKPKFYALDMFPYPSGAGLHVGHPEGYTATDILSRMKRMQGYNVLHPMGWDAFGLPAEQYALDTGNSPAEFTEHNINTFRNQIKSLGFSYDWDREVNTTDPNYYKWTQWIFLKLFEKGLAYVDEVPVNWCPALGTVLANEEIIDGKSERGGHPVERRPMRQWMLKITAYGDRLLEDLDELDWPESLKDMQRNWIGRSEGAEVHFNIDGTDEKFTVFTTRPDTLFGASYCVLAPEHALVADITTAEQKEAVEAYINSVKMKSDLERTELAKEKTGVFTGAYAVNPVNGEKLPIWIADYVLATYGTGAVMAVPAHDERDYEFASTFNLPMKEVVKGGDITKEAYTGDGAHVNSAFLDGLNKEEAIAKMIEWLEVTSAGNQKVTYRLRDWLFSRQRYWGEPIPVIHWEDGTMTAVKEEELPLVLPKTENIRPSGTGESPLANIDEWVNVVDPETGKKGRRETNTMPQWAGSCWYYLRYIDPNNSEALVDPEKVKQWLPVDIYIGGAEHAVLHLLYARFWHKVLYDIGVVPTKEPFQQLFNQGMILGENNEKMSKSKGNVVNPDDIVASHGADTLRLYEMFMGPLDASIAWSENGLDGARRFLDRVWRLFVQDNGELSEKITDAPNKDLEKAYHQTVKKVTEDYAELRFNTAISQMMVFINDAYKAETLPKEYVEGFVKMIAPVAPHIGEELWSKLGYNETITYASWPTFDESKLVEDEVEIVVQVMGKVRAKLTMSKDASKDEMEKLALEAIQDQIEGKTVRKVIVVPGKLVNVVAN</sequence>
<evidence type="ECO:0000255" key="1">
    <source>
        <dbReference type="HAMAP-Rule" id="MF_00049"/>
    </source>
</evidence>
<feature type="chain" id="PRO_0000151970" description="Leucine--tRNA ligase">
    <location>
        <begin position="1"/>
        <end position="802"/>
    </location>
</feature>
<feature type="short sequence motif" description="'HIGH' region">
    <location>
        <begin position="40"/>
        <end position="51"/>
    </location>
</feature>
<feature type="short sequence motif" description="'KMSKS' region">
    <location>
        <begin position="576"/>
        <end position="580"/>
    </location>
</feature>
<feature type="binding site" evidence="1">
    <location>
        <position position="579"/>
    </location>
    <ligand>
        <name>ATP</name>
        <dbReference type="ChEBI" id="CHEBI:30616"/>
    </ligand>
</feature>
<keyword id="KW-0030">Aminoacyl-tRNA synthetase</keyword>
<keyword id="KW-0067">ATP-binding</keyword>
<keyword id="KW-0963">Cytoplasm</keyword>
<keyword id="KW-0436">Ligase</keyword>
<keyword id="KW-0547">Nucleotide-binding</keyword>
<keyword id="KW-0648">Protein biosynthesis</keyword>